<gene>
    <name type="primary">UBI3</name>
    <name type="synonym">RPS27A</name>
</gene>
<feature type="chain" id="PRO_0000114851" description="Ubiquitin">
    <location>
        <begin position="1"/>
        <end position="76"/>
    </location>
</feature>
<feature type="chain" id="PRO_0000137684" description="Small ribosomal subunit protein eS31">
    <location>
        <begin position="77"/>
        <end position="156"/>
    </location>
</feature>
<feature type="domain" description="Ubiquitin-like" evidence="2">
    <location>
        <begin position="1"/>
        <end position="76"/>
    </location>
</feature>
<feature type="zinc finger region" description="C4-type">
    <location>
        <begin position="121"/>
        <end position="144"/>
    </location>
</feature>
<feature type="cross-link" description="Glycyl lysine isopeptide (Lys-Gly) (interchain with G-Cter in ubiquitin)" evidence="1">
    <location>
        <position position="48"/>
    </location>
</feature>
<feature type="cross-link" description="Glycyl lysine isopeptide (Gly-Lys) (interchain with K-? in acceptor proteins)" evidence="2">
    <location>
        <position position="76"/>
    </location>
</feature>
<keyword id="KW-0963">Cytoplasm</keyword>
<keyword id="KW-1017">Isopeptide bond</keyword>
<keyword id="KW-0479">Metal-binding</keyword>
<keyword id="KW-0539">Nucleus</keyword>
<keyword id="KW-1185">Reference proteome</keyword>
<keyword id="KW-0687">Ribonucleoprotein</keyword>
<keyword id="KW-0689">Ribosomal protein</keyword>
<keyword id="KW-0832">Ubl conjugation</keyword>
<keyword id="KW-0862">Zinc</keyword>
<keyword id="KW-0863">Zinc-finger</keyword>
<accession>P62981</accession>
<accession>O82079</accession>
<accession>P03993</accession>
<accession>P27083</accession>
<accession>P69324</accession>
<dbReference type="EMBL" id="Z11669">
    <property type="protein sequence ID" value="CAA77735.1"/>
    <property type="molecule type" value="mRNA"/>
</dbReference>
<dbReference type="EMBL" id="L22576">
    <property type="protein sequence ID" value="AAA19247.1"/>
    <property type="molecule type" value="Unassigned_DNA"/>
</dbReference>
<dbReference type="PIR" id="S25305">
    <property type="entry name" value="S25305"/>
</dbReference>
<dbReference type="SMR" id="P62981"/>
<dbReference type="FunCoup" id="P62981">
    <property type="interactions" value="1124"/>
</dbReference>
<dbReference type="STRING" id="4113.P62981"/>
<dbReference type="PaxDb" id="4113-PGSC0003DMT400013321"/>
<dbReference type="EnsemblPlants" id="PGSC0003DMT400013321">
    <property type="protein sequence ID" value="PGSC0003DMT400013321"/>
    <property type="gene ID" value="PGSC0003DMG400005199"/>
</dbReference>
<dbReference type="Gramene" id="PGSC0003DMT400013321">
    <property type="protein sequence ID" value="PGSC0003DMT400013321"/>
    <property type="gene ID" value="PGSC0003DMG400005199"/>
</dbReference>
<dbReference type="eggNOG" id="KOG0004">
    <property type="taxonomic scope" value="Eukaryota"/>
</dbReference>
<dbReference type="HOGENOM" id="CLU_010412_2_0_1"/>
<dbReference type="InParanoid" id="P62981"/>
<dbReference type="OMA" id="HANRHYC"/>
<dbReference type="OrthoDB" id="1296040at2759"/>
<dbReference type="Proteomes" id="UP000011115">
    <property type="component" value="Unassembled WGS sequence"/>
</dbReference>
<dbReference type="ExpressionAtlas" id="P62981">
    <property type="expression patterns" value="baseline"/>
</dbReference>
<dbReference type="GO" id="GO:0005737">
    <property type="term" value="C:cytoplasm"/>
    <property type="evidence" value="ECO:0000318"/>
    <property type="project" value="GO_Central"/>
</dbReference>
<dbReference type="GO" id="GO:0005634">
    <property type="term" value="C:nucleus"/>
    <property type="evidence" value="ECO:0000318"/>
    <property type="project" value="GO_Central"/>
</dbReference>
<dbReference type="GO" id="GO:1990904">
    <property type="term" value="C:ribonucleoprotein complex"/>
    <property type="evidence" value="ECO:0007669"/>
    <property type="project" value="UniProtKB-KW"/>
</dbReference>
<dbReference type="GO" id="GO:0005840">
    <property type="term" value="C:ribosome"/>
    <property type="evidence" value="ECO:0007669"/>
    <property type="project" value="UniProtKB-KW"/>
</dbReference>
<dbReference type="GO" id="GO:0003729">
    <property type="term" value="F:mRNA binding"/>
    <property type="evidence" value="ECO:0007669"/>
    <property type="project" value="UniProtKB-ARBA"/>
</dbReference>
<dbReference type="GO" id="GO:0031386">
    <property type="term" value="F:protein tag activity"/>
    <property type="evidence" value="ECO:0000318"/>
    <property type="project" value="GO_Central"/>
</dbReference>
<dbReference type="GO" id="GO:0003735">
    <property type="term" value="F:structural constituent of ribosome"/>
    <property type="evidence" value="ECO:0007669"/>
    <property type="project" value="InterPro"/>
</dbReference>
<dbReference type="GO" id="GO:0031625">
    <property type="term" value="F:ubiquitin protein ligase binding"/>
    <property type="evidence" value="ECO:0000318"/>
    <property type="project" value="GO_Central"/>
</dbReference>
<dbReference type="GO" id="GO:0008270">
    <property type="term" value="F:zinc ion binding"/>
    <property type="evidence" value="ECO:0007669"/>
    <property type="project" value="UniProtKB-KW"/>
</dbReference>
<dbReference type="GO" id="GO:0019941">
    <property type="term" value="P:modification-dependent protein catabolic process"/>
    <property type="evidence" value="ECO:0000318"/>
    <property type="project" value="GO_Central"/>
</dbReference>
<dbReference type="GO" id="GO:0016567">
    <property type="term" value="P:protein ubiquitination"/>
    <property type="evidence" value="ECO:0000318"/>
    <property type="project" value="GO_Central"/>
</dbReference>
<dbReference type="GO" id="GO:0006412">
    <property type="term" value="P:translation"/>
    <property type="evidence" value="ECO:0007669"/>
    <property type="project" value="InterPro"/>
</dbReference>
<dbReference type="CDD" id="cd01803">
    <property type="entry name" value="Ubl_ubiquitin"/>
    <property type="match status" value="1"/>
</dbReference>
<dbReference type="FunFam" id="3.10.20.90:FF:000008">
    <property type="entry name" value="Ubiquitin-40S ribosomal protein S27a"/>
    <property type="match status" value="1"/>
</dbReference>
<dbReference type="Gene3D" id="6.20.50.150">
    <property type="match status" value="1"/>
</dbReference>
<dbReference type="Gene3D" id="3.10.20.90">
    <property type="entry name" value="Phosphatidylinositol 3-kinase Catalytic Subunit, Chain A, domain 1"/>
    <property type="match status" value="1"/>
</dbReference>
<dbReference type="InterPro" id="IPR002906">
    <property type="entry name" value="Ribosomal_eS31"/>
</dbReference>
<dbReference type="InterPro" id="IPR038582">
    <property type="entry name" value="Ribosomal_eS31_euk-type_sf"/>
</dbReference>
<dbReference type="InterPro" id="IPR011332">
    <property type="entry name" value="Ribosomal_zn-bd"/>
</dbReference>
<dbReference type="InterPro" id="IPR000626">
    <property type="entry name" value="Ubiquitin-like_dom"/>
</dbReference>
<dbReference type="InterPro" id="IPR029071">
    <property type="entry name" value="Ubiquitin-like_domsf"/>
</dbReference>
<dbReference type="InterPro" id="IPR019954">
    <property type="entry name" value="Ubiquitin_CS"/>
</dbReference>
<dbReference type="InterPro" id="IPR019956">
    <property type="entry name" value="Ubiquitin_dom"/>
</dbReference>
<dbReference type="InterPro" id="IPR050158">
    <property type="entry name" value="Ubiquitin_ubiquitin-like"/>
</dbReference>
<dbReference type="PANTHER" id="PTHR10666">
    <property type="entry name" value="UBIQUITIN"/>
    <property type="match status" value="1"/>
</dbReference>
<dbReference type="Pfam" id="PF01599">
    <property type="entry name" value="Ribosomal_S27"/>
    <property type="match status" value="1"/>
</dbReference>
<dbReference type="Pfam" id="PF00240">
    <property type="entry name" value="ubiquitin"/>
    <property type="match status" value="1"/>
</dbReference>
<dbReference type="PRINTS" id="PR00348">
    <property type="entry name" value="UBIQUITIN"/>
</dbReference>
<dbReference type="SMART" id="SM01402">
    <property type="entry name" value="Ribosomal_S27"/>
    <property type="match status" value="1"/>
</dbReference>
<dbReference type="SMART" id="SM00213">
    <property type="entry name" value="UBQ"/>
    <property type="match status" value="1"/>
</dbReference>
<dbReference type="SUPFAM" id="SSF54236">
    <property type="entry name" value="Ubiquitin-like"/>
    <property type="match status" value="1"/>
</dbReference>
<dbReference type="SUPFAM" id="SSF57829">
    <property type="entry name" value="Zn-binding ribosomal proteins"/>
    <property type="match status" value="1"/>
</dbReference>
<dbReference type="PROSITE" id="PS00299">
    <property type="entry name" value="UBIQUITIN_1"/>
    <property type="match status" value="1"/>
</dbReference>
<dbReference type="PROSITE" id="PS50053">
    <property type="entry name" value="UBIQUITIN_2"/>
    <property type="match status" value="1"/>
</dbReference>
<protein>
    <recommendedName>
        <fullName evidence="3">Ubiquitin-ribosomal protein eS31 fusion protein</fullName>
    </recommendedName>
    <component>
        <recommendedName>
            <fullName>Ubiquitin</fullName>
        </recommendedName>
    </component>
    <component>
        <recommendedName>
            <fullName evidence="3">Small ribosomal subunit protein eS31</fullName>
        </recommendedName>
        <alternativeName>
            <fullName>40S ribosomal protein S27a</fullName>
        </alternativeName>
    </component>
</protein>
<sequence>MQIFVKTLTGKTITLEVESSDTIDNVKAKIQDKEGIPPDQQRLIFAGKQLEDGRTLADYNIQKESTLHLVLRLRGGAKKRKKKTYTKPKKIKHKKKKVKLAVLQFYKVDDTGKVQRLRKECPNAECGAGTFMANHFDRHYCGKCGLTYVYNKAGGD</sequence>
<comment type="function">
    <molecule>Ubiquitin</molecule>
    <text evidence="1">Exists either covalently attached to another protein, or free (unanchored). When covalently bound, it is conjugated to target proteins via an isopeptide bond either as a monomer (monoubiquitin), a polymer linked via different Lys residues of the ubiquitin (polyubiquitin chains) or a linear polymer linked via the initiator Met of the ubiquitin (linear polyubiquitin chains). Polyubiquitin chains, when attached to a target protein, have different functions depending on the Lys residue of the ubiquitin that is linked: Lys-48-linked is involved in protein degradation via the proteasome. Linear polymer chains formed via attachment by the initiator Met lead to cell signaling. Ubiquitin is usually conjugated to Lys residues of target proteins, however, in rare cases, conjugation to Cys or Ser residues has been observed. When polyubiquitin is free (unanchored-polyubiquitin), it also has distinct roles, such as in activation of protein kinases, and in signaling (By similarity).</text>
</comment>
<comment type="function">
    <molecule>Small ribosomal subunit protein eS31</molecule>
    <text>Component of the 40S subunit of the ribosome.</text>
</comment>
<comment type="subunit">
    <molecule>Small ribosomal subunit protein eS31</molecule>
    <text evidence="1">Part of the 40S ribosomal subunit.</text>
</comment>
<comment type="subcellular location">
    <molecule>Ubiquitin</molecule>
    <subcellularLocation>
        <location evidence="1">Cytoplasm</location>
    </subcellularLocation>
    <subcellularLocation>
        <location evidence="1">Nucleus</location>
    </subcellularLocation>
</comment>
<comment type="miscellaneous">
    <text>Ubiquitin is generally synthesized as a polyubiquitin precursor with tandem head to tail repeats. Often, there are one to three additional amino acids after the last repeat, removed in the mature protein. Alternatively, ubiquitin extension protein is synthesized as a single copy of ubiquitin fused to a ribosomal protein (either eL40 or eS31) or to an ubiquitin-related protein (either RUB1 or RUB2). Following translation, extension protein is cleaved from ubiquitin.</text>
</comment>
<comment type="similarity">
    <text evidence="3">In the N-terminal section; belongs to the ubiquitin family.</text>
</comment>
<comment type="similarity">
    <text evidence="3">In the C-terminal section; belongs to the eukaryotic ribosomal protein eS31 family.</text>
</comment>
<evidence type="ECO:0000250" key="1"/>
<evidence type="ECO:0000255" key="2">
    <source>
        <dbReference type="PROSITE-ProRule" id="PRU00214"/>
    </source>
</evidence>
<evidence type="ECO:0000305" key="3"/>
<reference key="1">
    <citation type="journal article" date="1992" name="Plant Mol. Biol.">
        <title>Expression of stress-responsive ubiquitin genes in potato tubers.</title>
        <authorList>
            <person name="Garbarino J.E."/>
            <person name="Rockhold D.R."/>
            <person name="Belknap W.R."/>
        </authorList>
    </citation>
    <scope>NUCLEOTIDE SEQUENCE [MRNA]</scope>
    <source>
        <strain>cv. Lemhi Russet</strain>
        <tissue>Tuber</tissue>
    </source>
</reference>
<reference key="2">
    <citation type="journal article" date="1994" name="Plant Mol. Biol.">
        <title>Isolation of a ubiquitin-ribosomal protein gene (ubi3) from potato and expression of its promoter in transgenic plants.</title>
        <authorList>
            <person name="Garbarino J.E."/>
            <person name="Belknap W.R."/>
        </authorList>
    </citation>
    <scope>NUCLEOTIDE SEQUENCE [GENOMIC DNA]</scope>
    <source>
        <strain>cv. Lemhi Russet</strain>
        <tissue>Tuber</tissue>
    </source>
</reference>
<reference key="3">
    <citation type="journal article" date="2011" name="Nature">
        <title>Genome sequence and analysis of the tuber crop potato.</title>
        <authorList>
            <consortium name="The Potato Genome Sequencing Consortium"/>
        </authorList>
    </citation>
    <scope>NUCLEOTIDE SEQUENCE [LARGE SCALE GENOMIC DNA]</scope>
    <source>
        <strain>cv. DM1-3 516 R44</strain>
    </source>
</reference>
<proteinExistence type="evidence at transcript level"/>
<name>RS27A_SOLTU</name>
<organism>
    <name type="scientific">Solanum tuberosum</name>
    <name type="common">Potato</name>
    <dbReference type="NCBI Taxonomy" id="4113"/>
    <lineage>
        <taxon>Eukaryota</taxon>
        <taxon>Viridiplantae</taxon>
        <taxon>Streptophyta</taxon>
        <taxon>Embryophyta</taxon>
        <taxon>Tracheophyta</taxon>
        <taxon>Spermatophyta</taxon>
        <taxon>Magnoliopsida</taxon>
        <taxon>eudicotyledons</taxon>
        <taxon>Gunneridae</taxon>
        <taxon>Pentapetalae</taxon>
        <taxon>asterids</taxon>
        <taxon>lamiids</taxon>
        <taxon>Solanales</taxon>
        <taxon>Solanaceae</taxon>
        <taxon>Solanoideae</taxon>
        <taxon>Solaneae</taxon>
        <taxon>Solanum</taxon>
    </lineage>
</organism>